<feature type="chain" id="PRO_0000367127" description="Katanin p60 ATPase-containing subunit A1">
    <location>
        <begin position="1"/>
        <end position="492"/>
    </location>
</feature>
<feature type="region of interest" description="Disordered" evidence="3">
    <location>
        <begin position="80"/>
        <end position="186"/>
    </location>
</feature>
<feature type="compositionally biased region" description="Basic and acidic residues" evidence="3">
    <location>
        <begin position="145"/>
        <end position="171"/>
    </location>
</feature>
<feature type="binding site" evidence="2">
    <location>
        <begin position="250"/>
        <end position="257"/>
    </location>
    <ligand>
        <name>ATP</name>
        <dbReference type="ChEBI" id="CHEBI:30616"/>
    </ligand>
</feature>
<accession>Q1HGK7</accession>
<evidence type="ECO:0000250" key="1">
    <source>
        <dbReference type="UniProtKB" id="O75449"/>
    </source>
</evidence>
<evidence type="ECO:0000255" key="2">
    <source>
        <dbReference type="HAMAP-Rule" id="MF_03023"/>
    </source>
</evidence>
<evidence type="ECO:0000256" key="3">
    <source>
        <dbReference type="SAM" id="MobiDB-lite"/>
    </source>
</evidence>
<proteinExistence type="evidence at transcript level"/>
<protein>
    <recommendedName>
        <fullName evidence="2">Katanin p60 ATPase-containing subunit A1</fullName>
        <shortName evidence="2">Katanin p60 subunit A1</shortName>
        <ecNumber evidence="2">5.6.1.1</ecNumber>
    </recommendedName>
    <alternativeName>
        <fullName evidence="2">p60 katanin</fullName>
    </alternativeName>
</protein>
<comment type="function">
    <text evidence="2">Catalytic subunit of a complex which severs microtubules in an ATP-dependent manner. Microtubule severing may promote rapid reorganization of cellular microtubule arrays and the release of microtubules from the centrosome following nucleation.</text>
</comment>
<comment type="catalytic activity">
    <reaction evidence="2">
        <text>n ATP + n H2O + a microtubule = n ADP + n phosphate + (n+1) alpha/beta tubulin heterodimers.</text>
        <dbReference type="EC" id="5.6.1.1"/>
    </reaction>
</comment>
<comment type="activity regulation">
    <text evidence="2">ATPase activity is stimulated by microtubules, which promote homooligomerization. ATP-dependent microtubule severing is stimulated by interaction with KATNB1.</text>
</comment>
<comment type="subunit">
    <text evidence="2">Can homooligomerize into hexameric rings, which may be promoted by interaction with microtubules. Interacts with KATNB1, which may serve as a targeting subunit.</text>
</comment>
<comment type="subcellular location">
    <subcellularLocation>
        <location evidence="2">Cytoplasm</location>
    </subcellularLocation>
    <subcellularLocation>
        <location evidence="2">Cytoplasm</location>
        <location evidence="2">Cytoskeleton</location>
        <location evidence="2">Microtubule organizing center</location>
        <location evidence="2">Centrosome</location>
    </subcellularLocation>
    <subcellularLocation>
        <location evidence="2">Cytoplasm</location>
        <location evidence="2">Cytoskeleton</location>
        <location evidence="2">Spindle pole</location>
    </subcellularLocation>
    <subcellularLocation>
        <location evidence="1">Cytoplasm</location>
        <location evidence="1">Cytoskeleton</location>
        <location evidence="1">Spindle</location>
    </subcellularLocation>
    <text evidence="2">Predominantly cytoplasmic. Also localized to the interphase centrosome and the mitotic spindle poles. Enhanced recruitment to the mitotic spindle poles requires microtubules and interaction with KATNB1.</text>
</comment>
<comment type="similarity">
    <text evidence="2">Belongs to the AAA ATPase family. Katanin p60 subunit A1 subfamily.</text>
</comment>
<reference key="1">
    <citation type="submission" date="2006-04" db="EMBL/GenBank/DDBJ databases">
        <title>Chicken p60-katanin expression during embryonal development.</title>
        <authorList>
            <person name="Korulu S."/>
            <person name="Yildiz A."/>
            <person name="Baas P.W."/>
            <person name="Karabay A."/>
        </authorList>
    </citation>
    <scope>NUCLEOTIDE SEQUENCE [MRNA]</scope>
    <source>
        <tissue>Brain</tissue>
    </source>
</reference>
<dbReference type="EC" id="5.6.1.1" evidence="2"/>
<dbReference type="EMBL" id="DQ486889">
    <property type="protein sequence ID" value="ABF21049.1"/>
    <property type="molecule type" value="mRNA"/>
</dbReference>
<dbReference type="RefSeq" id="NP_001038113.1">
    <property type="nucleotide sequence ID" value="NM_001044648.1"/>
</dbReference>
<dbReference type="SMR" id="Q1HGK7"/>
<dbReference type="FunCoup" id="Q1HGK7">
    <property type="interactions" value="1830"/>
</dbReference>
<dbReference type="STRING" id="9031.ENSGALP00000020184"/>
<dbReference type="PaxDb" id="9031-ENSGALP00000041928"/>
<dbReference type="KEGG" id="gga:421626"/>
<dbReference type="VEuPathDB" id="HostDB:geneid_421626"/>
<dbReference type="eggNOG" id="KOG0738">
    <property type="taxonomic scope" value="Eukaryota"/>
</dbReference>
<dbReference type="HOGENOM" id="CLU_000688_21_1_1"/>
<dbReference type="InParanoid" id="Q1HGK7"/>
<dbReference type="OrthoDB" id="5334845at2759"/>
<dbReference type="PhylomeDB" id="Q1HGK7"/>
<dbReference type="TreeFam" id="TF323170"/>
<dbReference type="PRO" id="PR:Q1HGK7"/>
<dbReference type="Proteomes" id="UP000000539">
    <property type="component" value="Unassembled WGS sequence"/>
</dbReference>
<dbReference type="GO" id="GO:0005813">
    <property type="term" value="C:centrosome"/>
    <property type="evidence" value="ECO:0007669"/>
    <property type="project" value="UniProtKB-SubCell"/>
</dbReference>
<dbReference type="GO" id="GO:0005737">
    <property type="term" value="C:cytoplasm"/>
    <property type="evidence" value="ECO:0000250"/>
    <property type="project" value="UniProtKB"/>
</dbReference>
<dbReference type="GO" id="GO:0005874">
    <property type="term" value="C:microtubule"/>
    <property type="evidence" value="ECO:0007669"/>
    <property type="project" value="UniProtKB-KW"/>
</dbReference>
<dbReference type="GO" id="GO:0015630">
    <property type="term" value="C:microtubule cytoskeleton"/>
    <property type="evidence" value="ECO:0000318"/>
    <property type="project" value="GO_Central"/>
</dbReference>
<dbReference type="GO" id="GO:0030496">
    <property type="term" value="C:midbody"/>
    <property type="evidence" value="ECO:0000250"/>
    <property type="project" value="UniProtKB"/>
</dbReference>
<dbReference type="GO" id="GO:0097431">
    <property type="term" value="C:mitotic spindle pole"/>
    <property type="evidence" value="ECO:0000250"/>
    <property type="project" value="UniProtKB"/>
</dbReference>
<dbReference type="GO" id="GO:0005819">
    <property type="term" value="C:spindle"/>
    <property type="evidence" value="ECO:0000250"/>
    <property type="project" value="UniProtKB"/>
</dbReference>
<dbReference type="GO" id="GO:0000922">
    <property type="term" value="C:spindle pole"/>
    <property type="evidence" value="ECO:0000250"/>
    <property type="project" value="UniProtKB"/>
</dbReference>
<dbReference type="GO" id="GO:0005524">
    <property type="term" value="F:ATP binding"/>
    <property type="evidence" value="ECO:0007669"/>
    <property type="project" value="UniProtKB-KW"/>
</dbReference>
<dbReference type="GO" id="GO:0016887">
    <property type="term" value="F:ATP hydrolysis activity"/>
    <property type="evidence" value="ECO:0000318"/>
    <property type="project" value="GO_Central"/>
</dbReference>
<dbReference type="GO" id="GO:0008017">
    <property type="term" value="F:microtubule binding"/>
    <property type="evidence" value="ECO:0007669"/>
    <property type="project" value="UniProtKB-UniRule"/>
</dbReference>
<dbReference type="GO" id="GO:0008568">
    <property type="term" value="F:microtubule severing ATPase activity"/>
    <property type="evidence" value="ECO:0007669"/>
    <property type="project" value="UniProtKB-EC"/>
</dbReference>
<dbReference type="GO" id="GO:0051301">
    <property type="term" value="P:cell division"/>
    <property type="evidence" value="ECO:0007669"/>
    <property type="project" value="UniProtKB-KW"/>
</dbReference>
<dbReference type="GO" id="GO:0051013">
    <property type="term" value="P:microtubule severing"/>
    <property type="evidence" value="ECO:0000318"/>
    <property type="project" value="GO_Central"/>
</dbReference>
<dbReference type="CDD" id="cd21748">
    <property type="entry name" value="Kp60-NTD"/>
    <property type="match status" value="1"/>
</dbReference>
<dbReference type="CDD" id="cd19522">
    <property type="entry name" value="RecA-like_KTNA1"/>
    <property type="match status" value="1"/>
</dbReference>
<dbReference type="FunFam" id="1.10.8.60:FF:000025">
    <property type="entry name" value="Katanin p60 ATPase-containing subunit A1"/>
    <property type="match status" value="1"/>
</dbReference>
<dbReference type="FunFam" id="1.20.58.80:FF:000003">
    <property type="entry name" value="Katanin p60 ATPase-containing subunit A1"/>
    <property type="match status" value="1"/>
</dbReference>
<dbReference type="FunFam" id="3.40.50.300:FF:000159">
    <property type="entry name" value="Katanin p60 ATPase-containing subunit A1"/>
    <property type="match status" value="1"/>
</dbReference>
<dbReference type="Gene3D" id="1.10.8.60">
    <property type="match status" value="1"/>
</dbReference>
<dbReference type="Gene3D" id="3.40.50.300">
    <property type="entry name" value="P-loop containing nucleotide triphosphate hydrolases"/>
    <property type="match status" value="1"/>
</dbReference>
<dbReference type="Gene3D" id="1.20.58.80">
    <property type="entry name" value="Phosphotransferase system, lactose/cellobiose-type IIA subunit"/>
    <property type="match status" value="1"/>
</dbReference>
<dbReference type="HAMAP" id="MF_03023">
    <property type="entry name" value="Katanin_p60_A1"/>
    <property type="match status" value="1"/>
</dbReference>
<dbReference type="InterPro" id="IPR003593">
    <property type="entry name" value="AAA+_ATPase"/>
</dbReference>
<dbReference type="InterPro" id="IPR041569">
    <property type="entry name" value="AAA_lid_3"/>
</dbReference>
<dbReference type="InterPro" id="IPR003959">
    <property type="entry name" value="ATPase_AAA_core"/>
</dbReference>
<dbReference type="InterPro" id="IPR003960">
    <property type="entry name" value="ATPase_AAA_CS"/>
</dbReference>
<dbReference type="InterPro" id="IPR028596">
    <property type="entry name" value="KATNA1"/>
</dbReference>
<dbReference type="InterPro" id="IPR048611">
    <property type="entry name" value="KATNA1_MIT"/>
</dbReference>
<dbReference type="InterPro" id="IPR048612">
    <property type="entry name" value="KTNA1_AAA_dom"/>
</dbReference>
<dbReference type="InterPro" id="IPR050304">
    <property type="entry name" value="MT-severing_AAA_ATPase"/>
</dbReference>
<dbReference type="InterPro" id="IPR027417">
    <property type="entry name" value="P-loop_NTPase"/>
</dbReference>
<dbReference type="InterPro" id="IPR015415">
    <property type="entry name" value="Spast_Vps4_C"/>
</dbReference>
<dbReference type="PANTHER" id="PTHR23074">
    <property type="entry name" value="AAA DOMAIN-CONTAINING"/>
    <property type="match status" value="1"/>
</dbReference>
<dbReference type="PANTHER" id="PTHR23074:SF71">
    <property type="entry name" value="KATANIN P60 ATPASE-CONTAINING SUBUNIT A1"/>
    <property type="match status" value="1"/>
</dbReference>
<dbReference type="Pfam" id="PF00004">
    <property type="entry name" value="AAA"/>
    <property type="match status" value="1"/>
</dbReference>
<dbReference type="Pfam" id="PF17862">
    <property type="entry name" value="AAA_lid_3"/>
    <property type="match status" value="1"/>
</dbReference>
<dbReference type="Pfam" id="PF21126">
    <property type="entry name" value="KATNA1_MIT"/>
    <property type="match status" value="1"/>
</dbReference>
<dbReference type="Pfam" id="PF09336">
    <property type="entry name" value="Vps4_C"/>
    <property type="match status" value="1"/>
</dbReference>
<dbReference type="SMART" id="SM00382">
    <property type="entry name" value="AAA"/>
    <property type="match status" value="1"/>
</dbReference>
<dbReference type="SUPFAM" id="SSF52540">
    <property type="entry name" value="P-loop containing nucleoside triphosphate hydrolases"/>
    <property type="match status" value="1"/>
</dbReference>
<dbReference type="PROSITE" id="PS00674">
    <property type="entry name" value="AAA"/>
    <property type="match status" value="1"/>
</dbReference>
<name>KTNA1_CHICK</name>
<keyword id="KW-0067">ATP-binding</keyword>
<keyword id="KW-0131">Cell cycle</keyword>
<keyword id="KW-0132">Cell division</keyword>
<keyword id="KW-0963">Cytoplasm</keyword>
<keyword id="KW-0206">Cytoskeleton</keyword>
<keyword id="KW-0413">Isomerase</keyword>
<keyword id="KW-0493">Microtubule</keyword>
<keyword id="KW-0498">Mitosis</keyword>
<keyword id="KW-0547">Nucleotide-binding</keyword>
<keyword id="KW-1185">Reference proteome</keyword>
<sequence length="492" mass="56039">MSLVMISENVKLAREYALLGNYDSAMVYYQGVLDQMNKYLYSLRDTYLQQKWQQVWQEISVEAKHVKDIMKMLESFKIDSTPPKASQQELPAHDAEVWSLPVPAERRPSPGPRKRQSAQYSDCRGHNNRISAAVRGPHRPSSRNPNDKGKAVRGREKKDQQNKGKEEKSKSTSEISESEPKKFDSTGYDKDLVEALERDIISQNPNIRWDDIADLVEAKKLLKEAVVLPMWMPEFFKGIRRPWKGVLMVGPPGTGKTLLAKAVATECKTTFFNVSSSTLTSKYRGESEKLVRLLFEMARFYAPTTIFIDEIDSICSRRGTSEEHEASRRVKAELLVQMDGVGGATENDDPSKMVMVLAATNFPWDIDEALRRRLEKRIYIPLPSAKGREELLRINLRELELADDVDLANIAEKMEGYSGADITNVCRDASLMAMRRRIEGLTPEEIRNLSRDEMHMPTTMEDFEIALKKVSKSVSAADIEKYEKWIVEFGSC</sequence>
<gene>
    <name evidence="2" type="primary">KATNA1</name>
</gene>
<organism>
    <name type="scientific">Gallus gallus</name>
    <name type="common">Chicken</name>
    <dbReference type="NCBI Taxonomy" id="9031"/>
    <lineage>
        <taxon>Eukaryota</taxon>
        <taxon>Metazoa</taxon>
        <taxon>Chordata</taxon>
        <taxon>Craniata</taxon>
        <taxon>Vertebrata</taxon>
        <taxon>Euteleostomi</taxon>
        <taxon>Archelosauria</taxon>
        <taxon>Archosauria</taxon>
        <taxon>Dinosauria</taxon>
        <taxon>Saurischia</taxon>
        <taxon>Theropoda</taxon>
        <taxon>Coelurosauria</taxon>
        <taxon>Aves</taxon>
        <taxon>Neognathae</taxon>
        <taxon>Galloanserae</taxon>
        <taxon>Galliformes</taxon>
        <taxon>Phasianidae</taxon>
        <taxon>Phasianinae</taxon>
        <taxon>Gallus</taxon>
    </lineage>
</organism>